<comment type="function">
    <text evidence="2 3 4">Required for protein transport between the Golgi and the endoplasmic reticulum. May tether coatomer-coated retrograde transport vesicles to the ER membrane through interaction with coatomer as well as the SNARE complex. May contribute to the stabilization of the SNARE complex.</text>
</comment>
<comment type="subunit">
    <text>Component of a peripheral membrane protein complex consisting of DSL1, SEC39/DSL3 and TIP20. Bound to a SNARE complex consisting of UFE1, USE1, SEC20 and SEC22 or YKT6 through direct interaction of TIP20 with SEC20. Binds the coatomer complex through direct interaction with RET2/COPD and RET1/COPA. Binds TIP20 and SEC39/DSL3.</text>
</comment>
<comment type="interaction">
    <interactant intactId="EBI-29249">
        <id>P53847</id>
    </interactant>
    <interactant intactId="EBI-31898">
        <id>Q12745</id>
        <label>SEC39</label>
    </interactant>
    <organismsDiffer>false</organismsDiffer>
    <experiments>15</experiments>
</comment>
<comment type="interaction">
    <interactant intactId="EBI-29249">
        <id>P53847</id>
    </interactant>
    <interactant intactId="EBI-19396">
        <id>P33891</id>
        <label>TIP20</label>
    </interactant>
    <organismsDiffer>false</organismsDiffer>
    <experiments>15</experiments>
</comment>
<comment type="subcellular location">
    <subcellularLocation>
        <location evidence="3 4">Endoplasmic reticulum membrane</location>
        <topology evidence="3 4">Peripheral membrane protein</topology>
    </subcellularLocation>
</comment>
<comment type="miscellaneous">
    <text evidence="6">Present with 8970 molecules/cell in log phase SD medium.</text>
</comment>
<organism>
    <name type="scientific">Saccharomyces cerevisiae (strain ATCC 204508 / S288c)</name>
    <name type="common">Baker's yeast</name>
    <dbReference type="NCBI Taxonomy" id="559292"/>
    <lineage>
        <taxon>Eukaryota</taxon>
        <taxon>Fungi</taxon>
        <taxon>Dikarya</taxon>
        <taxon>Ascomycota</taxon>
        <taxon>Saccharomycotina</taxon>
        <taxon>Saccharomycetes</taxon>
        <taxon>Saccharomycetales</taxon>
        <taxon>Saccharomycetaceae</taxon>
        <taxon>Saccharomyces</taxon>
    </lineage>
</organism>
<sequence>MESLFPNKGEIIRELLKDPLILKNDSKRSNGSELELDSSDLLQREAILANELNILDNLKTFLNLIKEVKTNLNILELENCYYSLQSLRKKMRNNAAYLKQSFNFQQSISTYVDTLHLELVSTLYKILTNGFWKITENSIQFTPTVEWGKDKVHIEYDTFMDFVAQQYFPKGSLDNQAWFILDMTSADSQEQVRAKLNTIMKEYMNLSRIVSMIKNSIFISGKEISYENEKNILVFSKSSSHGQHCVSTVLTSFEAVCDFMLDGLAFRDRKTLSYELGPLFNTEFTKFVKNNASIILESLDSPLKNLVSVINNKLTRLVAKSEVTNWTHSGKEIQDLLMNKQLYYNLLLDKVLESHISEIRSIFEDPKKSWQNLEVVELTTSNTNTMSEKIGKNDSDVQNEKELHNAVSKDDDWNWEVEDDDADAWGDEIDVNIDDEEEKTNQEKEKEPEEEENAWDEAWAIDENIDDASLENGKEHLKAHDVGSLDKDHIEVTQLPKLFLAISQNFKSSFADSHVDEQYFAYKYNLLQTSYMAMCTANFSHNWCQLYVDMRYLIERDEKLYRIKELTRNLLETKLNMKYRIVCQLIRHQLTEFRENERNPSWDATIEKLLPYILKEIVRPLQKIRGEEGSRYLLSFLNFLYNDCVTKEILKWQIISEVNSENLGELVSLLVNNTDIQLLAKEPSYKKMREKFATMGKFLPLHLKEIMEMFYNGDFYLFATDELIQWIELLFADTPLRRNAIDDIYEIRGTALDD</sequence>
<evidence type="ECO:0000256" key="1">
    <source>
        <dbReference type="SAM" id="MobiDB-lite"/>
    </source>
</evidence>
<evidence type="ECO:0000269" key="2">
    <source>
    </source>
</evidence>
<evidence type="ECO:0000269" key="3">
    <source>
    </source>
</evidence>
<evidence type="ECO:0000269" key="4">
    <source>
    </source>
</evidence>
<evidence type="ECO:0000269" key="5">
    <source>
    </source>
</evidence>
<evidence type="ECO:0000269" key="6">
    <source>
    </source>
</evidence>
<evidence type="ECO:0007829" key="7">
    <source>
        <dbReference type="PDB" id="3ETU"/>
    </source>
</evidence>
<evidence type="ECO:0007829" key="8">
    <source>
        <dbReference type="PDB" id="3ETV"/>
    </source>
</evidence>
<proteinExistence type="evidence at protein level"/>
<accession>P53847</accession>
<accession>D6W0T5</accession>
<dbReference type="EMBL" id="X96722">
    <property type="protein sequence ID" value="CAA65486.1"/>
    <property type="molecule type" value="Genomic_DNA"/>
</dbReference>
<dbReference type="EMBL" id="Z71534">
    <property type="protein sequence ID" value="CAA96165.1"/>
    <property type="molecule type" value="Genomic_DNA"/>
</dbReference>
<dbReference type="EMBL" id="BK006947">
    <property type="protein sequence ID" value="DAA10301.1"/>
    <property type="molecule type" value="Genomic_DNA"/>
</dbReference>
<dbReference type="PIR" id="S63231">
    <property type="entry name" value="S63231"/>
</dbReference>
<dbReference type="RefSeq" id="NP_014141.1">
    <property type="nucleotide sequence ID" value="NM_001183096.1"/>
</dbReference>
<dbReference type="PDB" id="3ETU">
    <property type="method" value="X-ray"/>
    <property type="resolution" value="2.40 A"/>
    <property type="chains" value="A=1-361"/>
</dbReference>
<dbReference type="PDB" id="3ETV">
    <property type="method" value="X-ray"/>
    <property type="resolution" value="1.94 A"/>
    <property type="chains" value="A=37-339"/>
</dbReference>
<dbReference type="PDB" id="5FJW">
    <property type="method" value="X-ray"/>
    <property type="resolution" value="2.80 A"/>
    <property type="chains" value="L/M/N/O/P/Q/R/S=411-419"/>
</dbReference>
<dbReference type="PDB" id="5FJZ">
    <property type="method" value="X-ray"/>
    <property type="resolution" value="1.90 A"/>
    <property type="chains" value="P/Q/R/S=411-419"/>
</dbReference>
<dbReference type="PDB" id="8EKI">
    <property type="method" value="EM"/>
    <property type="resolution" value="4.50 A"/>
    <property type="chains" value="E=1-754"/>
</dbReference>
<dbReference type="PDBsum" id="3ETU"/>
<dbReference type="PDBsum" id="3ETV"/>
<dbReference type="PDBsum" id="5FJW"/>
<dbReference type="PDBsum" id="5FJZ"/>
<dbReference type="PDBsum" id="8EKI"/>
<dbReference type="EMDB" id="EMD-28204"/>
<dbReference type="SMR" id="P53847"/>
<dbReference type="BioGRID" id="35581">
    <property type="interactions" value="81"/>
</dbReference>
<dbReference type="ComplexPortal" id="CPX-1786">
    <property type="entry name" value="Dsl1 tethering complex"/>
</dbReference>
<dbReference type="DIP" id="DIP-4274N"/>
<dbReference type="FunCoup" id="P53847">
    <property type="interactions" value="59"/>
</dbReference>
<dbReference type="IntAct" id="P53847">
    <property type="interactions" value="15"/>
</dbReference>
<dbReference type="STRING" id="4932.YNL258C"/>
<dbReference type="iPTMnet" id="P53847"/>
<dbReference type="PaxDb" id="4932-YNL258C"/>
<dbReference type="PeptideAtlas" id="P53847"/>
<dbReference type="EnsemblFungi" id="YNL258C_mRNA">
    <property type="protein sequence ID" value="YNL258C"/>
    <property type="gene ID" value="YNL258C"/>
</dbReference>
<dbReference type="GeneID" id="855463"/>
<dbReference type="KEGG" id="sce:YNL258C"/>
<dbReference type="AGR" id="SGD:S000005202"/>
<dbReference type="SGD" id="S000005202">
    <property type="gene designation" value="DSL1"/>
</dbReference>
<dbReference type="VEuPathDB" id="FungiDB:YNL258C"/>
<dbReference type="eggNOG" id="ENOG502QR7Q">
    <property type="taxonomic scope" value="Eukaryota"/>
</dbReference>
<dbReference type="HOGENOM" id="CLU_357169_0_0_1"/>
<dbReference type="InParanoid" id="P53847"/>
<dbReference type="OMA" id="NHLKDIM"/>
<dbReference type="OrthoDB" id="534815at2759"/>
<dbReference type="BioCyc" id="YEAST:G3O-33254-MONOMER"/>
<dbReference type="Reactome" id="R-SCE-6811434">
    <property type="pathway name" value="COPI-dependent Golgi-to-ER retrograde traffic"/>
</dbReference>
<dbReference type="BioGRID-ORCS" id="855463">
    <property type="hits" value="7 hits in 10 CRISPR screens"/>
</dbReference>
<dbReference type="EvolutionaryTrace" id="P53847"/>
<dbReference type="PRO" id="PR:P53847"/>
<dbReference type="Proteomes" id="UP000002311">
    <property type="component" value="Chromosome XIV"/>
</dbReference>
<dbReference type="RNAct" id="P53847">
    <property type="molecule type" value="protein"/>
</dbReference>
<dbReference type="GO" id="GO:0005829">
    <property type="term" value="C:cytosol"/>
    <property type="evidence" value="ECO:0007005"/>
    <property type="project" value="SGD"/>
</dbReference>
<dbReference type="GO" id="GO:0070939">
    <property type="term" value="C:Dsl1/NZR complex"/>
    <property type="evidence" value="ECO:0000314"/>
    <property type="project" value="SGD"/>
</dbReference>
<dbReference type="GO" id="GO:0005783">
    <property type="term" value="C:endoplasmic reticulum"/>
    <property type="evidence" value="ECO:0000314"/>
    <property type="project" value="SGD"/>
</dbReference>
<dbReference type="GO" id="GO:0005789">
    <property type="term" value="C:endoplasmic reticulum membrane"/>
    <property type="evidence" value="ECO:0007669"/>
    <property type="project" value="UniProtKB-SubCell"/>
</dbReference>
<dbReference type="GO" id="GO:0005634">
    <property type="term" value="C:nucleus"/>
    <property type="evidence" value="ECO:0000314"/>
    <property type="project" value="SGD"/>
</dbReference>
<dbReference type="GO" id="GO:1990423">
    <property type="term" value="C:RZZ complex"/>
    <property type="evidence" value="ECO:0000318"/>
    <property type="project" value="GO_Central"/>
</dbReference>
<dbReference type="GO" id="GO:0006888">
    <property type="term" value="P:endoplasmic reticulum to Golgi vesicle-mediated transport"/>
    <property type="evidence" value="ECO:0000318"/>
    <property type="project" value="GO_Central"/>
</dbReference>
<dbReference type="GO" id="GO:0032581">
    <property type="term" value="P:ER-dependent peroxisome organization"/>
    <property type="evidence" value="ECO:0000315"/>
    <property type="project" value="SGD"/>
</dbReference>
<dbReference type="GO" id="GO:0007094">
    <property type="term" value="P:mitotic spindle assembly checkpoint signaling"/>
    <property type="evidence" value="ECO:0000318"/>
    <property type="project" value="GO_Central"/>
</dbReference>
<dbReference type="GO" id="GO:0015031">
    <property type="term" value="P:protein transport"/>
    <property type="evidence" value="ECO:0007669"/>
    <property type="project" value="UniProtKB-KW"/>
</dbReference>
<dbReference type="GO" id="GO:0006890">
    <property type="term" value="P:retrograde vesicle-mediated transport, Golgi to endoplasmic reticulum"/>
    <property type="evidence" value="ECO:0000314"/>
    <property type="project" value="ComplexPortal"/>
</dbReference>
<dbReference type="Gene3D" id="1.10.287.3290">
    <property type="match status" value="1"/>
</dbReference>
<dbReference type="Gene3D" id="1.10.357.150">
    <property type="match status" value="1"/>
</dbReference>
<dbReference type="Gene3D" id="1.20.58.1440">
    <property type="match status" value="1"/>
</dbReference>
<dbReference type="Gene3D" id="1.20.58.2230">
    <property type="entry name" value="Retrograde transport protein Dsl1, N-terminal domain"/>
    <property type="match status" value="1"/>
</dbReference>
<dbReference type="InterPro" id="IPR021876">
    <property type="entry name" value="Dsl1_C"/>
</dbReference>
<dbReference type="InterPro" id="IPR021875">
    <property type="entry name" value="Dsl1_N_dom"/>
</dbReference>
<dbReference type="InterPro" id="IPR038442">
    <property type="entry name" value="Dsl1_N_sf"/>
</dbReference>
<dbReference type="InterPro" id="IPR046362">
    <property type="entry name" value="Zw10/DSL1_C_sf"/>
</dbReference>
<dbReference type="PANTHER" id="PTHR12205">
    <property type="entry name" value="CENTROMERE/KINETOCHORE PROTEIN ZW10"/>
    <property type="match status" value="1"/>
</dbReference>
<dbReference type="PANTHER" id="PTHR12205:SF0">
    <property type="entry name" value="CENTROMERE_KINETOCHORE PROTEIN ZW10 HOMOLOG"/>
    <property type="match status" value="1"/>
</dbReference>
<dbReference type="Pfam" id="PF11989">
    <property type="entry name" value="Dsl1_C"/>
    <property type="match status" value="1"/>
</dbReference>
<dbReference type="Pfam" id="PF11988">
    <property type="entry name" value="Dsl1_N"/>
    <property type="match status" value="1"/>
</dbReference>
<keyword id="KW-0002">3D-structure</keyword>
<keyword id="KW-0256">Endoplasmic reticulum</keyword>
<keyword id="KW-0931">ER-Golgi transport</keyword>
<keyword id="KW-0472">Membrane</keyword>
<keyword id="KW-0653">Protein transport</keyword>
<keyword id="KW-1185">Reference proteome</keyword>
<keyword id="KW-0813">Transport</keyword>
<protein>
    <recommendedName>
        <fullName>Protein transport protein DSL1</fullName>
    </recommendedName>
    <alternativeName>
        <fullName>Dependent on SLY1-20 protein 1</fullName>
    </alternativeName>
</protein>
<name>DSL1_YEAST</name>
<feature type="chain" id="PRO_0000203383" description="Protein transport protein DSL1">
    <location>
        <begin position="1"/>
        <end position="754"/>
    </location>
</feature>
<feature type="region of interest" description="Interaction with TIP20" evidence="4">
    <location>
        <begin position="1"/>
        <end position="200"/>
    </location>
</feature>
<feature type="region of interest" description="Interaction with RET2">
    <location>
        <begin position="406"/>
        <end position="459"/>
    </location>
</feature>
<feature type="region of interest" description="Interaction with RET1" evidence="5">
    <location>
        <begin position="406"/>
        <end position="440"/>
    </location>
</feature>
<feature type="region of interest" description="Disordered" evidence="1">
    <location>
        <begin position="425"/>
        <end position="454"/>
    </location>
</feature>
<feature type="compositionally biased region" description="Acidic residues" evidence="1">
    <location>
        <begin position="425"/>
        <end position="438"/>
    </location>
</feature>
<feature type="mutagenesis site" description="Viable and reduced interaction with RET2, strong Golgi-ER retrograde transport defect. Loss of interaction with RET2; when associated with A-455. Lethal and loss of interactions with RET1 and RET2; when associated with A-425." evidence="5">
    <original>W</original>
    <variation>A</variation>
    <location>
        <position position="413"/>
    </location>
</feature>
<feature type="mutagenesis site" description="Loss of interaction with RET1; when associated with A-413." evidence="5">
    <original>W</original>
    <variation>A</variation>
    <location>
        <position position="425"/>
    </location>
</feature>
<feature type="mutagenesis site" description="Viable and no effect. Lethal and loss of interaction with RET2 and reduced interaction with RET1; when associated with A-413." evidence="5">
    <original>W</original>
    <variation>A</variation>
    <location>
        <position position="455"/>
    </location>
</feature>
<feature type="mutagenesis site" description="In dsl1-22; strong Golgi-ER retrograde transport defect." evidence="3">
    <location>
        <begin position="725"/>
        <end position="754"/>
    </location>
</feature>
<feature type="helix" evidence="8">
    <location>
        <begin position="45"/>
        <end position="73"/>
    </location>
</feature>
<feature type="helix" evidence="8">
    <location>
        <begin position="77"/>
        <end position="93"/>
    </location>
</feature>
<feature type="helix" evidence="8">
    <location>
        <begin position="95"/>
        <end position="98"/>
    </location>
</feature>
<feature type="helix" evidence="8">
    <location>
        <begin position="102"/>
        <end position="129"/>
    </location>
</feature>
<feature type="strand" evidence="8">
    <location>
        <begin position="132"/>
        <end position="134"/>
    </location>
</feature>
<feature type="strand" evidence="8">
    <location>
        <begin position="136"/>
        <end position="141"/>
    </location>
</feature>
<feature type="strand" evidence="8">
    <location>
        <begin position="143"/>
        <end position="147"/>
    </location>
</feature>
<feature type="turn" evidence="8">
    <location>
        <begin position="148"/>
        <end position="151"/>
    </location>
</feature>
<feature type="strand" evidence="8">
    <location>
        <begin position="152"/>
        <end position="155"/>
    </location>
</feature>
<feature type="helix" evidence="8">
    <location>
        <begin position="156"/>
        <end position="167"/>
    </location>
</feature>
<feature type="helix" evidence="8">
    <location>
        <begin position="169"/>
        <end position="171"/>
    </location>
</feature>
<feature type="helix" evidence="8">
    <location>
        <begin position="178"/>
        <end position="181"/>
    </location>
</feature>
<feature type="helix" evidence="8">
    <location>
        <begin position="186"/>
        <end position="203"/>
    </location>
</feature>
<feature type="helix" evidence="8">
    <location>
        <begin position="207"/>
        <end position="216"/>
    </location>
</feature>
<feature type="strand" evidence="8">
    <location>
        <begin position="222"/>
        <end position="227"/>
    </location>
</feature>
<feature type="turn" evidence="8">
    <location>
        <begin position="228"/>
        <end position="231"/>
    </location>
</feature>
<feature type="strand" evidence="8">
    <location>
        <begin position="232"/>
        <end position="237"/>
    </location>
</feature>
<feature type="helix" evidence="8">
    <location>
        <begin position="246"/>
        <end position="262"/>
    </location>
</feature>
<feature type="helix" evidence="8">
    <location>
        <begin position="266"/>
        <end position="290"/>
    </location>
</feature>
<feature type="helix" evidence="8">
    <location>
        <begin position="292"/>
        <end position="295"/>
    </location>
</feature>
<feature type="strand" evidence="8">
    <location>
        <begin position="297"/>
        <end position="300"/>
    </location>
</feature>
<feature type="helix" evidence="8">
    <location>
        <begin position="302"/>
        <end position="321"/>
    </location>
</feature>
<feature type="helix" evidence="8">
    <location>
        <begin position="331"/>
        <end position="336"/>
    </location>
</feature>
<feature type="helix" evidence="7">
    <location>
        <begin position="340"/>
        <end position="354"/>
    </location>
</feature>
<reference key="1">
    <citation type="journal article" date="1997" name="Yeast">
        <title>Sequence analysis of the 33 kb long region between ORC5 and SUI1 from the left arm of chromosome XIV from Saccharomyces cerevisiae.</title>
        <authorList>
            <person name="Sen-Gupta M."/>
            <person name="Gueldener U."/>
            <person name="Beinhauer J.D."/>
            <person name="Fiedler T.A."/>
            <person name="Hegemann J.H."/>
        </authorList>
    </citation>
    <scope>NUCLEOTIDE SEQUENCE [GENOMIC DNA]</scope>
    <source>
        <strain>ATCC 96604 / S288c / FY1679</strain>
    </source>
</reference>
<reference key="2">
    <citation type="journal article" date="1997" name="Nature">
        <title>The nucleotide sequence of Saccharomyces cerevisiae chromosome XIV and its evolutionary implications.</title>
        <authorList>
            <person name="Philippsen P."/>
            <person name="Kleine K."/>
            <person name="Poehlmann R."/>
            <person name="Duesterhoeft A."/>
            <person name="Hamberg K."/>
            <person name="Hegemann J.H."/>
            <person name="Obermaier B."/>
            <person name="Urrestarazu L.A."/>
            <person name="Aert R."/>
            <person name="Albermann K."/>
            <person name="Altmann R."/>
            <person name="Andre B."/>
            <person name="Baladron V."/>
            <person name="Ballesta J.P.G."/>
            <person name="Becam A.-M."/>
            <person name="Beinhauer J.D."/>
            <person name="Boskovic J."/>
            <person name="Buitrago M.J."/>
            <person name="Bussereau F."/>
            <person name="Coster F."/>
            <person name="Crouzet M."/>
            <person name="D'Angelo M."/>
            <person name="Dal Pero F."/>
            <person name="De Antoni A."/>
            <person name="del Rey F."/>
            <person name="Doignon F."/>
            <person name="Domdey H."/>
            <person name="Dubois E."/>
            <person name="Fiedler T.A."/>
            <person name="Fleig U."/>
            <person name="Floeth M."/>
            <person name="Fritz C."/>
            <person name="Gaillardin C."/>
            <person name="Garcia-Cantalejo J.M."/>
            <person name="Glansdorff N."/>
            <person name="Goffeau A."/>
            <person name="Gueldener U."/>
            <person name="Herbert C.J."/>
            <person name="Heumann K."/>
            <person name="Heuss-Neitzel D."/>
            <person name="Hilbert H."/>
            <person name="Hinni K."/>
            <person name="Iraqui Houssaini I."/>
            <person name="Jacquet M."/>
            <person name="Jimenez A."/>
            <person name="Jonniaux J.-L."/>
            <person name="Karpfinger-Hartl L."/>
            <person name="Lanfranchi G."/>
            <person name="Lepingle A."/>
            <person name="Levesque H."/>
            <person name="Lyck R."/>
            <person name="Maftahi M."/>
            <person name="Mallet L."/>
            <person name="Maurer C.T.C."/>
            <person name="Messenguy F."/>
            <person name="Mewes H.-W."/>
            <person name="Moestl D."/>
            <person name="Nasr F."/>
            <person name="Nicaud J.-M."/>
            <person name="Niedenthal R.K."/>
            <person name="Pandolfo D."/>
            <person name="Pierard A."/>
            <person name="Piravandi E."/>
            <person name="Planta R.J."/>
            <person name="Pohl T.M."/>
            <person name="Purnelle B."/>
            <person name="Rebischung C."/>
            <person name="Remacha M.A."/>
            <person name="Revuelta J.L."/>
            <person name="Rinke M."/>
            <person name="Saiz J.E."/>
            <person name="Sartorello F."/>
            <person name="Scherens B."/>
            <person name="Sen-Gupta M."/>
            <person name="Soler-Mira A."/>
            <person name="Urbanus J.H.M."/>
            <person name="Valle G."/>
            <person name="Van Dyck L."/>
            <person name="Verhasselt P."/>
            <person name="Vierendeels F."/>
            <person name="Vissers S."/>
            <person name="Voet M."/>
            <person name="Volckaert G."/>
            <person name="Wach A."/>
            <person name="Wambutt R."/>
            <person name="Wedler H."/>
            <person name="Zollner A."/>
            <person name="Hani J."/>
        </authorList>
    </citation>
    <scope>NUCLEOTIDE SEQUENCE [LARGE SCALE GENOMIC DNA]</scope>
    <source>
        <strain>ATCC 204508 / S288c</strain>
    </source>
</reference>
<reference key="3">
    <citation type="journal article" date="2014" name="G3 (Bethesda)">
        <title>The reference genome sequence of Saccharomyces cerevisiae: Then and now.</title>
        <authorList>
            <person name="Engel S.R."/>
            <person name="Dietrich F.S."/>
            <person name="Fisk D.G."/>
            <person name="Binkley G."/>
            <person name="Balakrishnan R."/>
            <person name="Costanzo M.C."/>
            <person name="Dwight S.S."/>
            <person name="Hitz B.C."/>
            <person name="Karra K."/>
            <person name="Nash R.S."/>
            <person name="Weng S."/>
            <person name="Wong E.D."/>
            <person name="Lloyd P."/>
            <person name="Skrzypek M.S."/>
            <person name="Miyasato S.R."/>
            <person name="Simison M."/>
            <person name="Cherry J.M."/>
        </authorList>
    </citation>
    <scope>GENOME REANNOTATION</scope>
    <source>
        <strain>ATCC 204508 / S288c</strain>
    </source>
</reference>
<reference key="4">
    <citation type="journal article" date="2001" name="J. Biol. Chem.">
        <title>The coatomer-interacting protein Dsl1p is required for Golgi-to-endoplasmic reticulum retrieval in yeast.</title>
        <authorList>
            <person name="Andag U."/>
            <person name="Neumann T."/>
            <person name="Schmitt H.D."/>
        </authorList>
    </citation>
    <scope>FUNCTION</scope>
    <scope>SUBCELLULAR LOCATION</scope>
    <scope>MUTAGENESIS OF 725-GLN--ASP-754</scope>
</reference>
<reference key="5">
    <citation type="journal article" date="2001" name="Mol. Biol. Cell">
        <title>Golgi-to-endoplasmic reticulum (ER) retrograde traffic in yeast requires Dsl1p, a component of the ER target site that interacts with a COPI coat subunit.</title>
        <authorList>
            <person name="Reilly B.A."/>
            <person name="Kraynack B.A."/>
            <person name="VanRheenen S.M."/>
            <person name="Waters M.G."/>
        </authorList>
    </citation>
    <scope>FUNCTION</scope>
    <scope>SUBCELLULAR LOCATION</scope>
    <scope>INTERACTION WITH TIP20 AND RET2</scope>
</reference>
<reference key="6">
    <citation type="journal article" date="2001" name="Traffic">
        <title>Dsl1p, an essential protein required for membrane traffic at the endoplasmic reticulum/Golgi interface in yeast.</title>
        <authorList>
            <person name="VanRheenen S.M."/>
            <person name="Reilly B.A."/>
            <person name="Chamberlain S.J."/>
            <person name="Waters M.G."/>
        </authorList>
    </citation>
    <scope>FUNCTION</scope>
</reference>
<reference key="7">
    <citation type="journal article" date="2003" name="J. Biol. Chem.">
        <title>Dsl1p, an essential component of the Golgi-endoplasmic reticulum retrieval system in yeast, uses the same sequence motif to interact with different subunits of the COPI vesicle coat.</title>
        <authorList>
            <person name="Andag U."/>
            <person name="Schmitt H.D."/>
        </authorList>
    </citation>
    <scope>MUTAGENESIS OF TRP-413; TRP-425 AND TRP-455</scope>
    <scope>INTERACTION WITH RET1 AND RET2</scope>
</reference>
<reference key="8">
    <citation type="journal article" date="2003" name="Nature">
        <title>Global analysis of protein expression in yeast.</title>
        <authorList>
            <person name="Ghaemmaghami S."/>
            <person name="Huh W.-K."/>
            <person name="Bower K."/>
            <person name="Howson R.W."/>
            <person name="Belle A."/>
            <person name="Dephoure N."/>
            <person name="O'Shea E.K."/>
            <person name="Weissman J.S."/>
        </authorList>
    </citation>
    <scope>LEVEL OF PROTEIN EXPRESSION [LARGE SCALE ANALYSIS]</scope>
</reference>
<reference key="9">
    <citation type="journal article" date="2008" name="Mol. Cell. Proteomics">
        <title>A multidimensional chromatography technology for in-depth phosphoproteome analysis.</title>
        <authorList>
            <person name="Albuquerque C.P."/>
            <person name="Smolka M.B."/>
            <person name="Payne S.H."/>
            <person name="Bafna V."/>
            <person name="Eng J."/>
            <person name="Zhou H."/>
        </authorList>
    </citation>
    <scope>IDENTIFICATION BY MASS SPECTROMETRY [LARGE SCALE ANALYSIS]</scope>
</reference>
<reference key="10">
    <citation type="journal article" date="2012" name="Proc. Natl. Acad. Sci. U.S.A.">
        <title>N-terminal acetylome analyses and functional insights of the N-terminal acetyltransferase NatB.</title>
        <authorList>
            <person name="Van Damme P."/>
            <person name="Lasa M."/>
            <person name="Polevoda B."/>
            <person name="Gazquez C."/>
            <person name="Elosegui-Artola A."/>
            <person name="Kim D.S."/>
            <person name="De Juan-Pardo E."/>
            <person name="Demeyer K."/>
            <person name="Hole K."/>
            <person name="Larrea E."/>
            <person name="Timmerman E."/>
            <person name="Prieto J."/>
            <person name="Arnesen T."/>
            <person name="Sherman F."/>
            <person name="Gevaert K."/>
            <person name="Aldabe R."/>
        </authorList>
    </citation>
    <scope>IDENTIFICATION BY MASS SPECTROMETRY [LARGE SCALE ANALYSIS]</scope>
</reference>
<gene>
    <name type="primary">DSL1</name>
    <name type="ordered locus">YNL258C</name>
    <name type="ORF">N0842</name>
</gene>